<keyword id="KW-1185">Reference proteome</keyword>
<keyword id="KW-0687">Ribonucleoprotein</keyword>
<keyword id="KW-0689">Ribosomal protein</keyword>
<gene>
    <name evidence="1" type="primary">rpmC</name>
    <name type="ordered locus">Cphy_3659</name>
</gene>
<organism>
    <name type="scientific">Lachnoclostridium phytofermentans (strain ATCC 700394 / DSM 18823 / ISDg)</name>
    <name type="common">Clostridium phytofermentans</name>
    <dbReference type="NCBI Taxonomy" id="357809"/>
    <lineage>
        <taxon>Bacteria</taxon>
        <taxon>Bacillati</taxon>
        <taxon>Bacillota</taxon>
        <taxon>Clostridia</taxon>
        <taxon>Lachnospirales</taxon>
        <taxon>Lachnospiraceae</taxon>
    </lineage>
</organism>
<proteinExistence type="inferred from homology"/>
<comment type="similarity">
    <text evidence="1">Belongs to the universal ribosomal protein uL29 family.</text>
</comment>
<evidence type="ECO:0000255" key="1">
    <source>
        <dbReference type="HAMAP-Rule" id="MF_00374"/>
    </source>
</evidence>
<evidence type="ECO:0000305" key="2"/>
<sequence>MKTNKYVEELQAKSTTELNETLVAAKKELFNLRFQNATNQLDNTSRIKDVRKNIARIQTVISQKAKAAN</sequence>
<protein>
    <recommendedName>
        <fullName evidence="1">Large ribosomal subunit protein uL29</fullName>
    </recommendedName>
    <alternativeName>
        <fullName evidence="2">50S ribosomal protein L29</fullName>
    </alternativeName>
</protein>
<feature type="chain" id="PRO_1000079880" description="Large ribosomal subunit protein uL29">
    <location>
        <begin position="1"/>
        <end position="69"/>
    </location>
</feature>
<dbReference type="EMBL" id="CP000885">
    <property type="protein sequence ID" value="ABX44006.1"/>
    <property type="molecule type" value="Genomic_DNA"/>
</dbReference>
<dbReference type="RefSeq" id="WP_012201654.1">
    <property type="nucleotide sequence ID" value="NC_010001.1"/>
</dbReference>
<dbReference type="SMR" id="A9KJI6"/>
<dbReference type="STRING" id="357809.Cphy_3659"/>
<dbReference type="KEGG" id="cpy:Cphy_3659"/>
<dbReference type="eggNOG" id="COG0255">
    <property type="taxonomic scope" value="Bacteria"/>
</dbReference>
<dbReference type="HOGENOM" id="CLU_158491_1_0_9"/>
<dbReference type="OrthoDB" id="9815192at2"/>
<dbReference type="Proteomes" id="UP000000370">
    <property type="component" value="Chromosome"/>
</dbReference>
<dbReference type="GO" id="GO:0022625">
    <property type="term" value="C:cytosolic large ribosomal subunit"/>
    <property type="evidence" value="ECO:0007669"/>
    <property type="project" value="TreeGrafter"/>
</dbReference>
<dbReference type="GO" id="GO:0003735">
    <property type="term" value="F:structural constituent of ribosome"/>
    <property type="evidence" value="ECO:0007669"/>
    <property type="project" value="InterPro"/>
</dbReference>
<dbReference type="GO" id="GO:0006412">
    <property type="term" value="P:translation"/>
    <property type="evidence" value="ECO:0007669"/>
    <property type="project" value="UniProtKB-UniRule"/>
</dbReference>
<dbReference type="CDD" id="cd00427">
    <property type="entry name" value="Ribosomal_L29_HIP"/>
    <property type="match status" value="1"/>
</dbReference>
<dbReference type="FunFam" id="1.10.287.310:FF:000001">
    <property type="entry name" value="50S ribosomal protein L29"/>
    <property type="match status" value="1"/>
</dbReference>
<dbReference type="Gene3D" id="1.10.287.310">
    <property type="match status" value="1"/>
</dbReference>
<dbReference type="HAMAP" id="MF_00374">
    <property type="entry name" value="Ribosomal_uL29"/>
    <property type="match status" value="1"/>
</dbReference>
<dbReference type="InterPro" id="IPR050063">
    <property type="entry name" value="Ribosomal_protein_uL29"/>
</dbReference>
<dbReference type="InterPro" id="IPR001854">
    <property type="entry name" value="Ribosomal_uL29"/>
</dbReference>
<dbReference type="InterPro" id="IPR018254">
    <property type="entry name" value="Ribosomal_uL29_CS"/>
</dbReference>
<dbReference type="InterPro" id="IPR036049">
    <property type="entry name" value="Ribosomal_uL29_sf"/>
</dbReference>
<dbReference type="NCBIfam" id="TIGR00012">
    <property type="entry name" value="L29"/>
    <property type="match status" value="1"/>
</dbReference>
<dbReference type="PANTHER" id="PTHR10916">
    <property type="entry name" value="60S RIBOSOMAL PROTEIN L35/50S RIBOSOMAL PROTEIN L29"/>
    <property type="match status" value="1"/>
</dbReference>
<dbReference type="PANTHER" id="PTHR10916:SF0">
    <property type="entry name" value="LARGE RIBOSOMAL SUBUNIT PROTEIN UL29C"/>
    <property type="match status" value="1"/>
</dbReference>
<dbReference type="Pfam" id="PF00831">
    <property type="entry name" value="Ribosomal_L29"/>
    <property type="match status" value="1"/>
</dbReference>
<dbReference type="SUPFAM" id="SSF46561">
    <property type="entry name" value="Ribosomal protein L29 (L29p)"/>
    <property type="match status" value="1"/>
</dbReference>
<dbReference type="PROSITE" id="PS00579">
    <property type="entry name" value="RIBOSOMAL_L29"/>
    <property type="match status" value="1"/>
</dbReference>
<name>RL29_LACP7</name>
<reference key="1">
    <citation type="submission" date="2007-11" db="EMBL/GenBank/DDBJ databases">
        <title>Complete genome sequence of Clostridium phytofermentans ISDg.</title>
        <authorList>
            <person name="Leschine S.B."/>
            <person name="Warnick T.A."/>
            <person name="Blanchard J.L."/>
            <person name="Schnell D.J."/>
            <person name="Petit E.L."/>
            <person name="LaTouf W.G."/>
            <person name="Copeland A."/>
            <person name="Lucas S."/>
            <person name="Lapidus A."/>
            <person name="Barry K."/>
            <person name="Glavina del Rio T."/>
            <person name="Dalin E."/>
            <person name="Tice H."/>
            <person name="Pitluck S."/>
            <person name="Kiss H."/>
            <person name="Brettin T."/>
            <person name="Bruce D."/>
            <person name="Detter J.C."/>
            <person name="Han C."/>
            <person name="Kuske C."/>
            <person name="Schmutz J."/>
            <person name="Larimer F."/>
            <person name="Land M."/>
            <person name="Hauser L."/>
            <person name="Kyrpides N."/>
            <person name="Kim E.A."/>
            <person name="Richardson P."/>
        </authorList>
    </citation>
    <scope>NUCLEOTIDE SEQUENCE [LARGE SCALE GENOMIC DNA]</scope>
    <source>
        <strain>ATCC 700394 / DSM 18823 / ISDg</strain>
    </source>
</reference>
<accession>A9KJI6</accession>